<protein>
    <recommendedName>
        <fullName>Ubiquitin-like domain-containing CTD phosphatase 1</fullName>
        <ecNumber evidence="1">3.1.3.16</ecNumber>
    </recommendedName>
    <alternativeName>
        <fullName>Nuclear proteasome inhibitor UBLCP1</fullName>
    </alternativeName>
</protein>
<gene>
    <name type="primary">UBLCP1</name>
    <name type="ORF">RCJMB04_17j14</name>
</gene>
<name>UBCP1_CHICK</name>
<reference key="1">
    <citation type="journal article" date="2005" name="Genome Biol.">
        <title>Full-length cDNAs from chicken bursal lymphocytes to facilitate gene function analysis.</title>
        <authorList>
            <person name="Caldwell R.B."/>
            <person name="Kierzek A.M."/>
            <person name="Arakawa H."/>
            <person name="Bezzubov Y."/>
            <person name="Zaim J."/>
            <person name="Fiedler P."/>
            <person name="Kutter S."/>
            <person name="Blagodatski A."/>
            <person name="Kostovska D."/>
            <person name="Koter M."/>
            <person name="Plachy J."/>
            <person name="Carninci P."/>
            <person name="Hayashizaki Y."/>
            <person name="Buerstedde J.-M."/>
        </authorList>
    </citation>
    <scope>NUCLEOTIDE SEQUENCE [LARGE SCALE MRNA]</scope>
    <source>
        <strain>CB</strain>
        <tissue>Bursa of Fabricius</tissue>
    </source>
</reference>
<sequence>MSLSLIIKWGGQEYTITSLSEEDTVLDLKQSLKGLTGVLPERQKLLGLKMKGKPADDDVKLGALKLKPNTKIMMMGTREESLEDVLGPPPDNDDVINDFDIEEEVVEVENREENLLKISRRVKEYKVEILNPPREGKKLLVLDVDYTLFDHRSCAETGVELMRPYLHEFLTSAYEDYDIVIWSATNMKWIEAKMKELGVSTNANYKITFMLDSAAMITVHTPRRGLIDVKPLGVIWGKFSEYYSKKNTIMFDDIGRNFLMNPQNGLKIRPFMKAHLNRDKDKELLKLTQYLKEIAKLDDFLELNHKHWERYLSKKQGQ</sequence>
<keyword id="KW-0378">Hydrolase</keyword>
<keyword id="KW-0460">Magnesium</keyword>
<keyword id="KW-0479">Metal-binding</keyword>
<keyword id="KW-0539">Nucleus</keyword>
<keyword id="KW-0904">Protein phosphatase</keyword>
<keyword id="KW-1185">Reference proteome</keyword>
<accession>Q5ZJJ8</accession>
<evidence type="ECO:0000250" key="1">
    <source>
        <dbReference type="UniProtKB" id="Q8WVY7"/>
    </source>
</evidence>
<evidence type="ECO:0000250" key="2">
    <source>
        <dbReference type="UniProtKB" id="Q9XZ16"/>
    </source>
</evidence>
<evidence type="ECO:0000255" key="3">
    <source>
        <dbReference type="PROSITE-ProRule" id="PRU00214"/>
    </source>
</evidence>
<evidence type="ECO:0000255" key="4">
    <source>
        <dbReference type="PROSITE-ProRule" id="PRU00336"/>
    </source>
</evidence>
<proteinExistence type="evidence at transcript level"/>
<comment type="function">
    <text evidence="1">Dephosphorylates 26S nuclear proteasomes, thereby decreasing their proteolytic activity. Recruited to the 19S regulatory particle of the 26S proteasome where it dephosphorylates 19S component PSMC2 which impairs PSMC2 ATPase activity and disrupts 26S proteasome assembly. Has also been reported to stimulate the proteolytic activity of the 26S proteasome.</text>
</comment>
<comment type="catalytic activity">
    <reaction evidence="1">
        <text>O-phospho-L-seryl-[protein] + H2O = L-seryl-[protein] + phosphate</text>
        <dbReference type="Rhea" id="RHEA:20629"/>
        <dbReference type="Rhea" id="RHEA-COMP:9863"/>
        <dbReference type="Rhea" id="RHEA-COMP:11604"/>
        <dbReference type="ChEBI" id="CHEBI:15377"/>
        <dbReference type="ChEBI" id="CHEBI:29999"/>
        <dbReference type="ChEBI" id="CHEBI:43474"/>
        <dbReference type="ChEBI" id="CHEBI:83421"/>
        <dbReference type="EC" id="3.1.3.16"/>
    </reaction>
</comment>
<comment type="catalytic activity">
    <reaction evidence="1">
        <text>O-phospho-L-threonyl-[protein] + H2O = L-threonyl-[protein] + phosphate</text>
        <dbReference type="Rhea" id="RHEA:47004"/>
        <dbReference type="Rhea" id="RHEA-COMP:11060"/>
        <dbReference type="Rhea" id="RHEA-COMP:11605"/>
        <dbReference type="ChEBI" id="CHEBI:15377"/>
        <dbReference type="ChEBI" id="CHEBI:30013"/>
        <dbReference type="ChEBI" id="CHEBI:43474"/>
        <dbReference type="ChEBI" id="CHEBI:61977"/>
        <dbReference type="EC" id="3.1.3.16"/>
    </reaction>
</comment>
<comment type="cofactor">
    <cofactor evidence="1">
        <name>Mg(2+)</name>
        <dbReference type="ChEBI" id="CHEBI:18420"/>
    </cofactor>
</comment>
<comment type="subcellular location">
    <subcellularLocation>
        <location evidence="1">Nucleus</location>
    </subcellularLocation>
    <text evidence="1">Colocalizes with nuclear proteasomes.</text>
</comment>
<comment type="domain">
    <text evidence="1">The Ubiquitin-like domain mediates interaction with proteasomes.</text>
</comment>
<dbReference type="EC" id="3.1.3.16" evidence="1"/>
<dbReference type="EMBL" id="AJ720436">
    <property type="protein sequence ID" value="CAG32095.1"/>
    <property type="molecule type" value="mRNA"/>
</dbReference>
<dbReference type="RefSeq" id="NP_001025784.2">
    <property type="nucleotide sequence ID" value="NM_001030613.4"/>
</dbReference>
<dbReference type="RefSeq" id="XP_015149251.1">
    <property type="nucleotide sequence ID" value="XM_015293765.4"/>
</dbReference>
<dbReference type="RefSeq" id="XP_025010611.1">
    <property type="nucleotide sequence ID" value="XM_025154843.3"/>
</dbReference>
<dbReference type="RefSeq" id="XP_025010612.1">
    <property type="nucleotide sequence ID" value="XM_025154844.3"/>
</dbReference>
<dbReference type="RefSeq" id="XP_040502829.1">
    <property type="nucleotide sequence ID" value="XM_040646895.2"/>
</dbReference>
<dbReference type="RefSeq" id="XP_046756304.1">
    <property type="nucleotide sequence ID" value="XM_046900348.1"/>
</dbReference>
<dbReference type="RefSeq" id="XP_046782904.1">
    <property type="nucleotide sequence ID" value="XM_046926948.1"/>
</dbReference>
<dbReference type="RefSeq" id="XP_046782905.1">
    <property type="nucleotide sequence ID" value="XM_046926949.1"/>
</dbReference>
<dbReference type="RefSeq" id="XP_046782906.1">
    <property type="nucleotide sequence ID" value="XM_046926950.1"/>
</dbReference>
<dbReference type="RefSeq" id="XP_046782907.1">
    <property type="nucleotide sequence ID" value="XM_046926951.1"/>
</dbReference>
<dbReference type="RefSeq" id="XP_046782908.1">
    <property type="nucleotide sequence ID" value="XM_046926952.1"/>
</dbReference>
<dbReference type="SMR" id="Q5ZJJ8"/>
<dbReference type="FunCoup" id="Q5ZJJ8">
    <property type="interactions" value="1344"/>
</dbReference>
<dbReference type="STRING" id="9031.ENSGALP00000005808"/>
<dbReference type="PaxDb" id="9031-ENSGALP00000040691"/>
<dbReference type="Ensembl" id="ENSGALT00010035864.1">
    <property type="protein sequence ID" value="ENSGALP00010020802.1"/>
    <property type="gene ID" value="ENSGALG00010014900.1"/>
</dbReference>
<dbReference type="GeneID" id="416237"/>
<dbReference type="KEGG" id="gga:416237"/>
<dbReference type="CTD" id="134510"/>
<dbReference type="VEuPathDB" id="HostDB:geneid_416237"/>
<dbReference type="eggNOG" id="KOG1605">
    <property type="taxonomic scope" value="Eukaryota"/>
</dbReference>
<dbReference type="eggNOG" id="KOG1872">
    <property type="taxonomic scope" value="Eukaryota"/>
</dbReference>
<dbReference type="GeneTree" id="ENSGT00390000010107"/>
<dbReference type="HOGENOM" id="CLU_046931_1_0_1"/>
<dbReference type="InParanoid" id="Q5ZJJ8"/>
<dbReference type="OMA" id="TVHTPKY"/>
<dbReference type="OrthoDB" id="1711508at2759"/>
<dbReference type="PhylomeDB" id="Q5ZJJ8"/>
<dbReference type="TreeFam" id="TF323786"/>
<dbReference type="PRO" id="PR:Q5ZJJ8"/>
<dbReference type="Proteomes" id="UP000000539">
    <property type="component" value="Chromosome 13"/>
</dbReference>
<dbReference type="Bgee" id="ENSGALG00000003672">
    <property type="expression patterns" value="Expressed in spermatid and 13 other cell types or tissues"/>
</dbReference>
<dbReference type="GO" id="GO:0005730">
    <property type="term" value="C:nucleolus"/>
    <property type="evidence" value="ECO:0007669"/>
    <property type="project" value="Ensembl"/>
</dbReference>
<dbReference type="GO" id="GO:0005654">
    <property type="term" value="C:nucleoplasm"/>
    <property type="evidence" value="ECO:0007669"/>
    <property type="project" value="Ensembl"/>
</dbReference>
<dbReference type="GO" id="GO:0005634">
    <property type="term" value="C:nucleus"/>
    <property type="evidence" value="ECO:0000318"/>
    <property type="project" value="GO_Central"/>
</dbReference>
<dbReference type="GO" id="GO:0046872">
    <property type="term" value="F:metal ion binding"/>
    <property type="evidence" value="ECO:0007669"/>
    <property type="project" value="UniProtKB-KW"/>
</dbReference>
<dbReference type="GO" id="GO:1904855">
    <property type="term" value="F:proteasome regulatory particle binding"/>
    <property type="evidence" value="ECO:0007669"/>
    <property type="project" value="Ensembl"/>
</dbReference>
<dbReference type="GO" id="GO:0004722">
    <property type="term" value="F:protein serine/threonine phosphatase activity"/>
    <property type="evidence" value="ECO:0000318"/>
    <property type="project" value="GO_Central"/>
</dbReference>
<dbReference type="GO" id="GO:0090364">
    <property type="term" value="P:regulation of proteasome assembly"/>
    <property type="evidence" value="ECO:0000318"/>
    <property type="project" value="GO_Central"/>
</dbReference>
<dbReference type="CDD" id="cd01813">
    <property type="entry name" value="Ubl_UBLCP1"/>
    <property type="match status" value="1"/>
</dbReference>
<dbReference type="FunFam" id="3.40.50.1000:FF:000050">
    <property type="entry name" value="Ubiquitin-like domain-containing CTD phosphatase 1"/>
    <property type="match status" value="1"/>
</dbReference>
<dbReference type="FunFam" id="3.10.20.90:FF:000060">
    <property type="entry name" value="ubiquitin-like domain-containing CTD phosphatase 1"/>
    <property type="match status" value="1"/>
</dbReference>
<dbReference type="Gene3D" id="3.40.50.1000">
    <property type="entry name" value="HAD superfamily/HAD-like"/>
    <property type="match status" value="1"/>
</dbReference>
<dbReference type="Gene3D" id="3.10.20.90">
    <property type="entry name" value="Phosphatidylinositol 3-kinase Catalytic Subunit, Chain A, domain 1"/>
    <property type="match status" value="1"/>
</dbReference>
<dbReference type="InterPro" id="IPR004274">
    <property type="entry name" value="FCP1_dom"/>
</dbReference>
<dbReference type="InterPro" id="IPR036412">
    <property type="entry name" value="HAD-like_sf"/>
</dbReference>
<dbReference type="InterPro" id="IPR011943">
    <property type="entry name" value="HAD-SF_hydro_IIID"/>
</dbReference>
<dbReference type="InterPro" id="IPR023214">
    <property type="entry name" value="HAD_sf"/>
</dbReference>
<dbReference type="InterPro" id="IPR000626">
    <property type="entry name" value="Ubiquitin-like_dom"/>
</dbReference>
<dbReference type="InterPro" id="IPR029071">
    <property type="entry name" value="Ubiquitin-like_domsf"/>
</dbReference>
<dbReference type="InterPro" id="IPR051658">
    <property type="entry name" value="UBLCP1"/>
</dbReference>
<dbReference type="NCBIfam" id="TIGR02245">
    <property type="entry name" value="HAD_IIID1"/>
    <property type="match status" value="1"/>
</dbReference>
<dbReference type="PANTHER" id="PTHR48493">
    <property type="entry name" value="UBIQUITIN-LIKE DOMAIN-CONTAINING CTD PHOSPHATASE 1"/>
    <property type="match status" value="1"/>
</dbReference>
<dbReference type="PANTHER" id="PTHR48493:SF1">
    <property type="entry name" value="UBIQUITIN-LIKE DOMAIN-CONTAINING CTD PHOSPHATASE 1"/>
    <property type="match status" value="1"/>
</dbReference>
<dbReference type="Pfam" id="PF03031">
    <property type="entry name" value="NIF"/>
    <property type="match status" value="1"/>
</dbReference>
<dbReference type="Pfam" id="PF00240">
    <property type="entry name" value="ubiquitin"/>
    <property type="match status" value="1"/>
</dbReference>
<dbReference type="SMART" id="SM00577">
    <property type="entry name" value="CPDc"/>
    <property type="match status" value="1"/>
</dbReference>
<dbReference type="SMART" id="SM00213">
    <property type="entry name" value="UBQ"/>
    <property type="match status" value="1"/>
</dbReference>
<dbReference type="SUPFAM" id="SSF56784">
    <property type="entry name" value="HAD-like"/>
    <property type="match status" value="1"/>
</dbReference>
<dbReference type="SUPFAM" id="SSF54236">
    <property type="entry name" value="Ubiquitin-like"/>
    <property type="match status" value="1"/>
</dbReference>
<dbReference type="PROSITE" id="PS50969">
    <property type="entry name" value="FCP1"/>
    <property type="match status" value="1"/>
</dbReference>
<dbReference type="PROSITE" id="PS50053">
    <property type="entry name" value="UBIQUITIN_2"/>
    <property type="match status" value="1"/>
</dbReference>
<feature type="chain" id="PRO_0000242644" description="Ubiquitin-like domain-containing CTD phosphatase 1">
    <location>
        <begin position="1"/>
        <end position="318"/>
    </location>
</feature>
<feature type="domain" description="Ubiquitin-like" evidence="3">
    <location>
        <begin position="3"/>
        <end position="81"/>
    </location>
</feature>
<feature type="domain" description="FCP1 homology" evidence="4">
    <location>
        <begin position="133"/>
        <end position="294"/>
    </location>
</feature>
<feature type="binding site" evidence="2">
    <location>
        <position position="143"/>
    </location>
    <ligand>
        <name>Mg(2+)</name>
        <dbReference type="ChEBI" id="CHEBI:18420"/>
    </ligand>
</feature>
<feature type="binding site" evidence="2">
    <location>
        <position position="145"/>
    </location>
    <ligand>
        <name>Mg(2+)</name>
        <dbReference type="ChEBI" id="CHEBI:18420"/>
    </ligand>
</feature>
<feature type="binding site" evidence="2">
    <location>
        <position position="253"/>
    </location>
    <ligand>
        <name>Mg(2+)</name>
        <dbReference type="ChEBI" id="CHEBI:18420"/>
    </ligand>
</feature>
<organism>
    <name type="scientific">Gallus gallus</name>
    <name type="common">Chicken</name>
    <dbReference type="NCBI Taxonomy" id="9031"/>
    <lineage>
        <taxon>Eukaryota</taxon>
        <taxon>Metazoa</taxon>
        <taxon>Chordata</taxon>
        <taxon>Craniata</taxon>
        <taxon>Vertebrata</taxon>
        <taxon>Euteleostomi</taxon>
        <taxon>Archelosauria</taxon>
        <taxon>Archosauria</taxon>
        <taxon>Dinosauria</taxon>
        <taxon>Saurischia</taxon>
        <taxon>Theropoda</taxon>
        <taxon>Coelurosauria</taxon>
        <taxon>Aves</taxon>
        <taxon>Neognathae</taxon>
        <taxon>Galloanserae</taxon>
        <taxon>Galliformes</taxon>
        <taxon>Phasianidae</taxon>
        <taxon>Phasianinae</taxon>
        <taxon>Gallus</taxon>
    </lineage>
</organism>